<dbReference type="EC" id="3.1.-.-" evidence="1"/>
<dbReference type="EMBL" id="CP000153">
    <property type="protein sequence ID" value="ABB44349.1"/>
    <property type="molecule type" value="Genomic_DNA"/>
</dbReference>
<dbReference type="RefSeq" id="WP_011372701.1">
    <property type="nucleotide sequence ID" value="NC_007575.1"/>
</dbReference>
<dbReference type="SMR" id="Q30RN2"/>
<dbReference type="STRING" id="326298.Suden_1071"/>
<dbReference type="KEGG" id="tdn:Suden_1071"/>
<dbReference type="eggNOG" id="COG0319">
    <property type="taxonomic scope" value="Bacteria"/>
</dbReference>
<dbReference type="HOGENOM" id="CLU_106710_3_0_7"/>
<dbReference type="OrthoDB" id="9807740at2"/>
<dbReference type="Proteomes" id="UP000002714">
    <property type="component" value="Chromosome"/>
</dbReference>
<dbReference type="GO" id="GO:0005737">
    <property type="term" value="C:cytoplasm"/>
    <property type="evidence" value="ECO:0007669"/>
    <property type="project" value="UniProtKB-SubCell"/>
</dbReference>
<dbReference type="GO" id="GO:0004222">
    <property type="term" value="F:metalloendopeptidase activity"/>
    <property type="evidence" value="ECO:0007669"/>
    <property type="project" value="InterPro"/>
</dbReference>
<dbReference type="GO" id="GO:0004521">
    <property type="term" value="F:RNA endonuclease activity"/>
    <property type="evidence" value="ECO:0007669"/>
    <property type="project" value="UniProtKB-UniRule"/>
</dbReference>
<dbReference type="GO" id="GO:0008270">
    <property type="term" value="F:zinc ion binding"/>
    <property type="evidence" value="ECO:0007669"/>
    <property type="project" value="UniProtKB-UniRule"/>
</dbReference>
<dbReference type="GO" id="GO:0006364">
    <property type="term" value="P:rRNA processing"/>
    <property type="evidence" value="ECO:0007669"/>
    <property type="project" value="UniProtKB-UniRule"/>
</dbReference>
<dbReference type="Gene3D" id="3.40.390.30">
    <property type="entry name" value="Metalloproteases ('zincins'), catalytic domain"/>
    <property type="match status" value="1"/>
</dbReference>
<dbReference type="HAMAP" id="MF_00009">
    <property type="entry name" value="Endoribonucl_YbeY"/>
    <property type="match status" value="1"/>
</dbReference>
<dbReference type="InterPro" id="IPR023091">
    <property type="entry name" value="MetalPrtase_cat_dom_sf_prd"/>
</dbReference>
<dbReference type="InterPro" id="IPR002036">
    <property type="entry name" value="YbeY"/>
</dbReference>
<dbReference type="InterPro" id="IPR020549">
    <property type="entry name" value="YbeY_CS"/>
</dbReference>
<dbReference type="NCBIfam" id="TIGR00043">
    <property type="entry name" value="rRNA maturation RNase YbeY"/>
    <property type="match status" value="1"/>
</dbReference>
<dbReference type="PANTHER" id="PTHR46986">
    <property type="entry name" value="ENDORIBONUCLEASE YBEY, CHLOROPLASTIC"/>
    <property type="match status" value="1"/>
</dbReference>
<dbReference type="PANTHER" id="PTHR46986:SF1">
    <property type="entry name" value="ENDORIBONUCLEASE YBEY, CHLOROPLASTIC"/>
    <property type="match status" value="1"/>
</dbReference>
<dbReference type="Pfam" id="PF02130">
    <property type="entry name" value="YbeY"/>
    <property type="match status" value="1"/>
</dbReference>
<dbReference type="SUPFAM" id="SSF55486">
    <property type="entry name" value="Metalloproteases ('zincins'), catalytic domain"/>
    <property type="match status" value="1"/>
</dbReference>
<dbReference type="PROSITE" id="PS01306">
    <property type="entry name" value="UPF0054"/>
    <property type="match status" value="1"/>
</dbReference>
<proteinExistence type="inferred from homology"/>
<name>YBEY_SULDN</name>
<keyword id="KW-0963">Cytoplasm</keyword>
<keyword id="KW-0255">Endonuclease</keyword>
<keyword id="KW-0378">Hydrolase</keyword>
<keyword id="KW-0479">Metal-binding</keyword>
<keyword id="KW-0540">Nuclease</keyword>
<keyword id="KW-1185">Reference proteome</keyword>
<keyword id="KW-0690">Ribosome biogenesis</keyword>
<keyword id="KW-0698">rRNA processing</keyword>
<keyword id="KW-0862">Zinc</keyword>
<gene>
    <name evidence="1" type="primary">ybeY</name>
    <name type="ordered locus">Suden_1071</name>
</gene>
<organism>
    <name type="scientific">Sulfurimonas denitrificans (strain ATCC 33889 / DSM 1251)</name>
    <name type="common">Thiomicrospira denitrificans (strain ATCC 33889 / DSM 1251)</name>
    <dbReference type="NCBI Taxonomy" id="326298"/>
    <lineage>
        <taxon>Bacteria</taxon>
        <taxon>Pseudomonadati</taxon>
        <taxon>Campylobacterota</taxon>
        <taxon>Epsilonproteobacteria</taxon>
        <taxon>Campylobacterales</taxon>
        <taxon>Sulfurimonadaceae</taxon>
        <taxon>Sulfurimonas</taxon>
    </lineage>
</organism>
<feature type="chain" id="PRO_0000284344" description="Endoribonuclease YbeY">
    <location>
        <begin position="1"/>
        <end position="139"/>
    </location>
</feature>
<feature type="binding site" evidence="1">
    <location>
        <position position="99"/>
    </location>
    <ligand>
        <name>Zn(2+)</name>
        <dbReference type="ChEBI" id="CHEBI:29105"/>
        <note>catalytic</note>
    </ligand>
</feature>
<feature type="binding site" evidence="1">
    <location>
        <position position="103"/>
    </location>
    <ligand>
        <name>Zn(2+)</name>
        <dbReference type="ChEBI" id="CHEBI:29105"/>
        <note>catalytic</note>
    </ligand>
</feature>
<feature type="binding site" evidence="1">
    <location>
        <position position="109"/>
    </location>
    <ligand>
        <name>Zn(2+)</name>
        <dbReference type="ChEBI" id="CHEBI:29105"/>
        <note>catalytic</note>
    </ligand>
</feature>
<accession>Q30RN2</accession>
<comment type="function">
    <text evidence="1">Single strand-specific metallo-endoribonuclease involved in late-stage 70S ribosome quality control and in maturation of the 3' terminus of the 16S rRNA.</text>
</comment>
<comment type="cofactor">
    <cofactor evidence="1">
        <name>Zn(2+)</name>
        <dbReference type="ChEBI" id="CHEBI:29105"/>
    </cofactor>
    <text evidence="1">Binds 1 zinc ion.</text>
</comment>
<comment type="subcellular location">
    <subcellularLocation>
        <location evidence="1">Cytoplasm</location>
    </subcellularLocation>
</comment>
<comment type="similarity">
    <text evidence="1">Belongs to the endoribonuclease YbeY family.</text>
</comment>
<sequence length="139" mass="15888">MIDFDNRTSLNLHIEVIEQIASSLTNKEIELIVTDKDEMREINSAHRNIDKATDVLSFPYIEMPLSPLGSIVICSLHVEEKSKEFGHTLNDEFALLFIHGLLHLLGYDHEVDSGEMREEEARIIKEFNLPQSLIVRSEG</sequence>
<evidence type="ECO:0000255" key="1">
    <source>
        <dbReference type="HAMAP-Rule" id="MF_00009"/>
    </source>
</evidence>
<protein>
    <recommendedName>
        <fullName evidence="1">Endoribonuclease YbeY</fullName>
        <ecNumber evidence="1">3.1.-.-</ecNumber>
    </recommendedName>
</protein>
<reference key="1">
    <citation type="journal article" date="2008" name="Appl. Environ. Microbiol.">
        <title>Genome of the epsilonproteobacterial chemolithoautotroph Sulfurimonas denitrificans.</title>
        <authorList>
            <person name="Sievert S.M."/>
            <person name="Scott K.M."/>
            <person name="Klotz M.G."/>
            <person name="Chain P.S.G."/>
            <person name="Hauser L.J."/>
            <person name="Hemp J."/>
            <person name="Huegler M."/>
            <person name="Land M."/>
            <person name="Lapidus A."/>
            <person name="Larimer F.W."/>
            <person name="Lucas S."/>
            <person name="Malfatti S.A."/>
            <person name="Meyer F."/>
            <person name="Paulsen I.T."/>
            <person name="Ren Q."/>
            <person name="Simon J."/>
            <person name="Bailey K."/>
            <person name="Diaz E."/>
            <person name="Fitzpatrick K.A."/>
            <person name="Glover B."/>
            <person name="Gwatney N."/>
            <person name="Korajkic A."/>
            <person name="Long A."/>
            <person name="Mobberley J.M."/>
            <person name="Pantry S.N."/>
            <person name="Pazder G."/>
            <person name="Peterson S."/>
            <person name="Quintanilla J.D."/>
            <person name="Sprinkle R."/>
            <person name="Stephens J."/>
            <person name="Thomas P."/>
            <person name="Vaughn R."/>
            <person name="Weber M.J."/>
            <person name="Wooten L.L."/>
        </authorList>
    </citation>
    <scope>NUCLEOTIDE SEQUENCE [LARGE SCALE GENOMIC DNA]</scope>
    <source>
        <strain>ATCC 33889 / DSM 1251</strain>
    </source>
</reference>